<gene>
    <name type="primary">wxcX</name>
    <name type="ordered locus">xcc-b100_3726</name>
</gene>
<proteinExistence type="predicted"/>
<feature type="chain" id="PRO_0000333185" description="Uncharacterized protein WxcX">
    <location>
        <begin position="1"/>
        <end position="695"/>
    </location>
</feature>
<organism>
    <name type="scientific">Xanthomonas campestris pv. campestris (strain B100)</name>
    <dbReference type="NCBI Taxonomy" id="509169"/>
    <lineage>
        <taxon>Bacteria</taxon>
        <taxon>Pseudomonadati</taxon>
        <taxon>Pseudomonadota</taxon>
        <taxon>Gammaproteobacteria</taxon>
        <taxon>Lysobacterales</taxon>
        <taxon>Lysobacteraceae</taxon>
        <taxon>Xanthomonas</taxon>
    </lineage>
</organism>
<sequence>MSTLDRSIQARARAHLFGLLRAGFRAIPLSDATRDRWRSWFLDRHADWVPEPVRGRANHAISRRPTARSDEAAIGHVAYRTTALPETLPATLVAFYLPQFHPIPENDAWWGKGFTEWRNVSRTLPQFEGHQQPRLPADLGFYDLRTPDVMREQARLAQEYGLGAFCFYFYWFAGKTLLEMPITQWHADTSITLPFCLCWANEKWARRWDGRGHDVLIDQAHSADDDLAFIAHVARYMRNPKYLRVGDRPLLLVYRPHLLPEPVQTAARWRNWCRDNGIGEIHLAYVQGFERPDPRDIGFDAAVEFPPNMSTPPSVTARQRLVNPDFSGDVFDWRELARDMEQRPLRDYTLYPGVNPGWDNEPRRSGKGRIYLHASPRRYRDWLARTVQHRLANAPSAHRMVFINAWNEWAEGAVLEPDARLGYAWLDATRQALTRAPDVATEICSPSACVVLHAWYLDVLDEMLDAIVECGTPLRIIITTDLTKVIEVTKCIQRRGIQAEVEGFENRGRDILPFLHVANRLLDENVQLVLKLHTKKSTHRDDGNAWRGEMLTALLGPQRVDAIVNAFSTDPLVGLAAPEDHLLPVTEFIGGNADALDYLTVRTGSDAPDTNSLFASGSMFWARLEALRPLLDAHLHASEFESEQGQIDGTLAHAIERFVGLAVTHSGHRVTTVEQTLGITKTPSAQPYRYARKAP</sequence>
<comment type="sequence caution" evidence="1">
    <conflict type="frameshift">
        <sequence resource="EMBL-CDS" id="AAK53494"/>
    </conflict>
</comment>
<name>WXCX_XANCB</name>
<evidence type="ECO:0000305" key="1"/>
<protein>
    <recommendedName>
        <fullName>Uncharacterized protein WxcX</fullName>
    </recommendedName>
</protein>
<accession>B0RVK2</accession>
<accession>O34262</accession>
<dbReference type="EMBL" id="AM920689">
    <property type="protein sequence ID" value="CAP53093.1"/>
    <property type="molecule type" value="Genomic_DNA"/>
</dbReference>
<dbReference type="EMBL" id="AF204145">
    <property type="protein sequence ID" value="AAK53494.1"/>
    <property type="status" value="ALT_FRAME"/>
    <property type="molecule type" value="Genomic_DNA"/>
</dbReference>
<dbReference type="KEGG" id="xca:xcc-b100_3726"/>
<dbReference type="HOGENOM" id="CLU_018279_0_0_6"/>
<dbReference type="Proteomes" id="UP000001188">
    <property type="component" value="Chromosome"/>
</dbReference>
<dbReference type="CDD" id="cd11579">
    <property type="entry name" value="Glyco_tran_WbsX"/>
    <property type="match status" value="1"/>
</dbReference>
<dbReference type="Gene3D" id="3.20.20.80">
    <property type="entry name" value="Glycosidases"/>
    <property type="match status" value="1"/>
</dbReference>
<dbReference type="InterPro" id="IPR007739">
    <property type="entry name" value="RgpF"/>
</dbReference>
<dbReference type="InterPro" id="IPR032719">
    <property type="entry name" value="WbsX"/>
</dbReference>
<dbReference type="PANTHER" id="PTHR41244:SF1">
    <property type="entry name" value="GLYCOSYLTRANSFERASE"/>
    <property type="match status" value="1"/>
</dbReference>
<dbReference type="PANTHER" id="PTHR41244">
    <property type="entry name" value="RHAMNAN SYNTHESIS F"/>
    <property type="match status" value="1"/>
</dbReference>
<dbReference type="Pfam" id="PF14307">
    <property type="entry name" value="Glyco_tran_WbsX"/>
    <property type="match status" value="1"/>
</dbReference>
<dbReference type="Pfam" id="PF05045">
    <property type="entry name" value="RgpF"/>
    <property type="match status" value="1"/>
</dbReference>
<reference key="1">
    <citation type="journal article" date="2008" name="J. Biotechnol.">
        <title>The genome of Xanthomonas campestris pv. campestris B100 and its use for the reconstruction of metabolic pathways involved in xanthan biosynthesis.</title>
        <authorList>
            <person name="Vorhoelter F.-J."/>
            <person name="Schneiker S."/>
            <person name="Goesmann A."/>
            <person name="Krause L."/>
            <person name="Bekel T."/>
            <person name="Kaiser O."/>
            <person name="Linke B."/>
            <person name="Patschkowski T."/>
            <person name="Rueckert C."/>
            <person name="Schmid J."/>
            <person name="Sidhu V.K."/>
            <person name="Sieber V."/>
            <person name="Tauch A."/>
            <person name="Watt S.A."/>
            <person name="Weisshaar B."/>
            <person name="Becker A."/>
            <person name="Niehaus K."/>
            <person name="Puehler A."/>
        </authorList>
    </citation>
    <scope>NUCLEOTIDE SEQUENCE [LARGE SCALE GENOMIC DNA]</scope>
    <source>
        <strain>B100</strain>
    </source>
</reference>
<reference key="2">
    <citation type="journal article" date="1997" name="Arch. Microbiol.">
        <title>Xanthomonas campestris pv. campestris lpsI and lpsJ genes encoding putative proteins with sequence similarity to the alpha- and beta-subunits of 3-oxoacid CoA-transferases are involved in LPS biosynthesis.</title>
        <authorList>
            <person name="Steinmann D."/>
            <person name="Koeplin R."/>
            <person name="Puehler A."/>
            <person name="Niehaus K."/>
        </authorList>
    </citation>
    <scope>NUCLEOTIDE SEQUENCE [GENOMIC DNA] OF 356-695</scope>
</reference>